<gene>
    <name evidence="1" type="primary">rimM</name>
    <name type="ordered locus">Mmar10_2897</name>
</gene>
<organism>
    <name type="scientific">Maricaulis maris (strain MCS10)</name>
    <name type="common">Caulobacter maris</name>
    <dbReference type="NCBI Taxonomy" id="394221"/>
    <lineage>
        <taxon>Bacteria</taxon>
        <taxon>Pseudomonadati</taxon>
        <taxon>Pseudomonadota</taxon>
        <taxon>Alphaproteobacteria</taxon>
        <taxon>Maricaulales</taxon>
        <taxon>Maricaulaceae</taxon>
        <taxon>Maricaulis</taxon>
    </lineage>
</organism>
<accession>Q0AKL5</accession>
<name>RIMM_MARMM</name>
<evidence type="ECO:0000255" key="1">
    <source>
        <dbReference type="HAMAP-Rule" id="MF_00014"/>
    </source>
</evidence>
<evidence type="ECO:0000256" key="2">
    <source>
        <dbReference type="SAM" id="MobiDB-lite"/>
    </source>
</evidence>
<feature type="chain" id="PRO_0000321737" description="Ribosome maturation factor RimM">
    <location>
        <begin position="1"/>
        <end position="185"/>
    </location>
</feature>
<feature type="domain" description="PRC barrel" evidence="1">
    <location>
        <begin position="96"/>
        <end position="171"/>
    </location>
</feature>
<feature type="region of interest" description="Disordered" evidence="2">
    <location>
        <begin position="165"/>
        <end position="185"/>
    </location>
</feature>
<keyword id="KW-0143">Chaperone</keyword>
<keyword id="KW-0963">Cytoplasm</keyword>
<keyword id="KW-1185">Reference proteome</keyword>
<keyword id="KW-0690">Ribosome biogenesis</keyword>
<keyword id="KW-0698">rRNA processing</keyword>
<reference key="1">
    <citation type="submission" date="2006-08" db="EMBL/GenBank/DDBJ databases">
        <title>Complete sequence of Maricaulis maris MCS10.</title>
        <authorList>
            <consortium name="US DOE Joint Genome Institute"/>
            <person name="Copeland A."/>
            <person name="Lucas S."/>
            <person name="Lapidus A."/>
            <person name="Barry K."/>
            <person name="Detter J.C."/>
            <person name="Glavina del Rio T."/>
            <person name="Hammon N."/>
            <person name="Israni S."/>
            <person name="Dalin E."/>
            <person name="Tice H."/>
            <person name="Pitluck S."/>
            <person name="Saunders E."/>
            <person name="Brettin T."/>
            <person name="Bruce D."/>
            <person name="Han C."/>
            <person name="Tapia R."/>
            <person name="Gilna P."/>
            <person name="Schmutz J."/>
            <person name="Larimer F."/>
            <person name="Land M."/>
            <person name="Hauser L."/>
            <person name="Kyrpides N."/>
            <person name="Mikhailova N."/>
            <person name="Viollier P."/>
            <person name="Stephens C."/>
            <person name="Richardson P."/>
        </authorList>
    </citation>
    <scope>NUCLEOTIDE SEQUENCE [LARGE SCALE GENOMIC DNA]</scope>
    <source>
        <strain>MCS10</strain>
    </source>
</reference>
<dbReference type="EMBL" id="CP000449">
    <property type="protein sequence ID" value="ABI67178.1"/>
    <property type="molecule type" value="Genomic_DNA"/>
</dbReference>
<dbReference type="RefSeq" id="WP_011644822.1">
    <property type="nucleotide sequence ID" value="NC_008347.1"/>
</dbReference>
<dbReference type="SMR" id="Q0AKL5"/>
<dbReference type="STRING" id="394221.Mmar10_2897"/>
<dbReference type="KEGG" id="mmr:Mmar10_2897"/>
<dbReference type="eggNOG" id="COG0806">
    <property type="taxonomic scope" value="Bacteria"/>
</dbReference>
<dbReference type="HOGENOM" id="CLU_077636_0_1_5"/>
<dbReference type="OrthoDB" id="9788191at2"/>
<dbReference type="Proteomes" id="UP000001964">
    <property type="component" value="Chromosome"/>
</dbReference>
<dbReference type="GO" id="GO:0005737">
    <property type="term" value="C:cytoplasm"/>
    <property type="evidence" value="ECO:0007669"/>
    <property type="project" value="UniProtKB-SubCell"/>
</dbReference>
<dbReference type="GO" id="GO:0005840">
    <property type="term" value="C:ribosome"/>
    <property type="evidence" value="ECO:0007669"/>
    <property type="project" value="InterPro"/>
</dbReference>
<dbReference type="GO" id="GO:0043022">
    <property type="term" value="F:ribosome binding"/>
    <property type="evidence" value="ECO:0007669"/>
    <property type="project" value="InterPro"/>
</dbReference>
<dbReference type="GO" id="GO:0042274">
    <property type="term" value="P:ribosomal small subunit biogenesis"/>
    <property type="evidence" value="ECO:0007669"/>
    <property type="project" value="UniProtKB-UniRule"/>
</dbReference>
<dbReference type="GO" id="GO:0006364">
    <property type="term" value="P:rRNA processing"/>
    <property type="evidence" value="ECO:0007669"/>
    <property type="project" value="UniProtKB-UniRule"/>
</dbReference>
<dbReference type="Gene3D" id="2.30.30.240">
    <property type="entry name" value="PRC-barrel domain"/>
    <property type="match status" value="1"/>
</dbReference>
<dbReference type="Gene3D" id="2.40.30.60">
    <property type="entry name" value="RimM"/>
    <property type="match status" value="1"/>
</dbReference>
<dbReference type="HAMAP" id="MF_00014">
    <property type="entry name" value="Ribosome_mat_RimM"/>
    <property type="match status" value="1"/>
</dbReference>
<dbReference type="InterPro" id="IPR011033">
    <property type="entry name" value="PRC_barrel-like_sf"/>
</dbReference>
<dbReference type="InterPro" id="IPR056792">
    <property type="entry name" value="PRC_RimM"/>
</dbReference>
<dbReference type="InterPro" id="IPR011961">
    <property type="entry name" value="RimM"/>
</dbReference>
<dbReference type="InterPro" id="IPR002676">
    <property type="entry name" value="RimM_N"/>
</dbReference>
<dbReference type="InterPro" id="IPR036976">
    <property type="entry name" value="RimM_N_sf"/>
</dbReference>
<dbReference type="InterPro" id="IPR009000">
    <property type="entry name" value="Transl_B-barrel_sf"/>
</dbReference>
<dbReference type="NCBIfam" id="TIGR02273">
    <property type="entry name" value="16S_RimM"/>
    <property type="match status" value="1"/>
</dbReference>
<dbReference type="PANTHER" id="PTHR33692">
    <property type="entry name" value="RIBOSOME MATURATION FACTOR RIMM"/>
    <property type="match status" value="1"/>
</dbReference>
<dbReference type="PANTHER" id="PTHR33692:SF1">
    <property type="entry name" value="RIBOSOME MATURATION FACTOR RIMM"/>
    <property type="match status" value="1"/>
</dbReference>
<dbReference type="Pfam" id="PF24986">
    <property type="entry name" value="PRC_RimM"/>
    <property type="match status" value="1"/>
</dbReference>
<dbReference type="Pfam" id="PF01782">
    <property type="entry name" value="RimM"/>
    <property type="match status" value="1"/>
</dbReference>
<dbReference type="SUPFAM" id="SSF50346">
    <property type="entry name" value="PRC-barrel domain"/>
    <property type="match status" value="1"/>
</dbReference>
<dbReference type="SUPFAM" id="SSF50447">
    <property type="entry name" value="Translation proteins"/>
    <property type="match status" value="1"/>
</dbReference>
<sequence length="185" mass="19698">MTEPADDLVFIAAIAGAHGVRGECKVKSFAGNPADAFKYGAFLDIDGKTILTPKAARPVKDGFVVRFAEPLDRDKAQALKGTKLHVLRSALPELEEDEFYHSDLLGLKVQGLDGAPMGTLKAVHNFGSGDLLEITGTPDRNGSWMLPFTREFVPHVSIAEGVITIDPPEDVGSKAEEEGGGAPDD</sequence>
<comment type="function">
    <text evidence="1">An accessory protein needed during the final step in the assembly of 30S ribosomal subunit, possibly for assembly of the head region. Essential for efficient processing of 16S rRNA. May be needed both before and after RbfA during the maturation of 16S rRNA. It has affinity for free ribosomal 30S subunits but not for 70S ribosomes.</text>
</comment>
<comment type="subunit">
    <text evidence="1">Binds ribosomal protein uS19.</text>
</comment>
<comment type="subcellular location">
    <subcellularLocation>
        <location evidence="1">Cytoplasm</location>
    </subcellularLocation>
</comment>
<comment type="domain">
    <text evidence="1">The PRC barrel domain binds ribosomal protein uS19.</text>
</comment>
<comment type="similarity">
    <text evidence="1">Belongs to the RimM family.</text>
</comment>
<proteinExistence type="inferred from homology"/>
<protein>
    <recommendedName>
        <fullName evidence="1">Ribosome maturation factor RimM</fullName>
    </recommendedName>
</protein>